<comment type="subunit">
    <text evidence="1">Homodimer and heterodimers.</text>
</comment>
<comment type="subcellular location">
    <subcellularLocation>
        <location evidence="1">Cell membrane</location>
        <topology evidence="1">Multi-pass membrane protein</topology>
    </subcellularLocation>
</comment>
<comment type="similarity">
    <text evidence="3">Belongs to the Casparian strip membrane proteins (CASP) family.</text>
</comment>
<gene>
    <name type="ORF">POPTRDRAFT_822486</name>
</gene>
<organism>
    <name type="scientific">Populus trichocarpa</name>
    <name type="common">Western balsam poplar</name>
    <name type="synonym">Populus balsamifera subsp. trichocarpa</name>
    <dbReference type="NCBI Taxonomy" id="3694"/>
    <lineage>
        <taxon>Eukaryota</taxon>
        <taxon>Viridiplantae</taxon>
        <taxon>Streptophyta</taxon>
        <taxon>Embryophyta</taxon>
        <taxon>Tracheophyta</taxon>
        <taxon>Spermatophyta</taxon>
        <taxon>Magnoliopsida</taxon>
        <taxon>eudicotyledons</taxon>
        <taxon>Gunneridae</taxon>
        <taxon>Pentapetalae</taxon>
        <taxon>rosids</taxon>
        <taxon>fabids</taxon>
        <taxon>Malpighiales</taxon>
        <taxon>Salicaceae</taxon>
        <taxon>Saliceae</taxon>
        <taxon>Populus</taxon>
    </lineage>
</organism>
<reference key="1">
    <citation type="journal article" date="2006" name="Science">
        <title>The genome of black cottonwood, Populus trichocarpa (Torr. &amp; Gray).</title>
        <authorList>
            <person name="Tuskan G.A."/>
            <person name="Difazio S."/>
            <person name="Jansson S."/>
            <person name="Bohlmann J."/>
            <person name="Grigoriev I."/>
            <person name="Hellsten U."/>
            <person name="Putnam N."/>
            <person name="Ralph S."/>
            <person name="Rombauts S."/>
            <person name="Salamov A."/>
            <person name="Schein J."/>
            <person name="Sterck L."/>
            <person name="Aerts A."/>
            <person name="Bhalerao R.R."/>
            <person name="Bhalerao R.P."/>
            <person name="Blaudez D."/>
            <person name="Boerjan W."/>
            <person name="Brun A."/>
            <person name="Brunner A."/>
            <person name="Busov V."/>
            <person name="Campbell M."/>
            <person name="Carlson J."/>
            <person name="Chalot M."/>
            <person name="Chapman J."/>
            <person name="Chen G.-L."/>
            <person name="Cooper D."/>
            <person name="Coutinho P.M."/>
            <person name="Couturier J."/>
            <person name="Covert S."/>
            <person name="Cronk Q."/>
            <person name="Cunningham R."/>
            <person name="Davis J."/>
            <person name="Degroeve S."/>
            <person name="Dejardin A."/>
            <person name="dePamphilis C.W."/>
            <person name="Detter J."/>
            <person name="Dirks B."/>
            <person name="Dubchak I."/>
            <person name="Duplessis S."/>
            <person name="Ehlting J."/>
            <person name="Ellis B."/>
            <person name="Gendler K."/>
            <person name="Goodstein D."/>
            <person name="Gribskov M."/>
            <person name="Grimwood J."/>
            <person name="Groover A."/>
            <person name="Gunter L."/>
            <person name="Hamberger B."/>
            <person name="Heinze B."/>
            <person name="Helariutta Y."/>
            <person name="Henrissat B."/>
            <person name="Holligan D."/>
            <person name="Holt R."/>
            <person name="Huang W."/>
            <person name="Islam-Faridi N."/>
            <person name="Jones S."/>
            <person name="Jones-Rhoades M."/>
            <person name="Jorgensen R."/>
            <person name="Joshi C."/>
            <person name="Kangasjaervi J."/>
            <person name="Karlsson J."/>
            <person name="Kelleher C."/>
            <person name="Kirkpatrick R."/>
            <person name="Kirst M."/>
            <person name="Kohler A."/>
            <person name="Kalluri U."/>
            <person name="Larimer F."/>
            <person name="Leebens-Mack J."/>
            <person name="Leple J.-C."/>
            <person name="Locascio P."/>
            <person name="Lou Y."/>
            <person name="Lucas S."/>
            <person name="Martin F."/>
            <person name="Montanini B."/>
            <person name="Napoli C."/>
            <person name="Nelson D.R."/>
            <person name="Nelson C."/>
            <person name="Nieminen K."/>
            <person name="Nilsson O."/>
            <person name="Pereda V."/>
            <person name="Peter G."/>
            <person name="Philippe R."/>
            <person name="Pilate G."/>
            <person name="Poliakov A."/>
            <person name="Razumovskaya J."/>
            <person name="Richardson P."/>
            <person name="Rinaldi C."/>
            <person name="Ritland K."/>
            <person name="Rouze P."/>
            <person name="Ryaboy D."/>
            <person name="Schmutz J."/>
            <person name="Schrader J."/>
            <person name="Segerman B."/>
            <person name="Shin H."/>
            <person name="Siddiqui A."/>
            <person name="Sterky F."/>
            <person name="Terry A."/>
            <person name="Tsai C.-J."/>
            <person name="Uberbacher E."/>
            <person name="Unneberg P."/>
            <person name="Vahala J."/>
            <person name="Wall K."/>
            <person name="Wessler S."/>
            <person name="Yang G."/>
            <person name="Yin T."/>
            <person name="Douglas C."/>
            <person name="Marra M."/>
            <person name="Sandberg G."/>
            <person name="Van de Peer Y."/>
            <person name="Rokhsar D.S."/>
        </authorList>
    </citation>
    <scope>NUCLEOTIDE SEQUENCE [LARGE SCALE GENOMIC DNA]</scope>
    <source>
        <strain>cv. Nisqually</strain>
    </source>
</reference>
<reference key="2">
    <citation type="submission" date="2008-12" db="EMBL/GenBank/DDBJ databases">
        <authorList>
            <consortium name="US DOE Joint Genome Institute (JGI-PGF)"/>
            <person name="Grigoriev I.V."/>
            <person name="Terry A."/>
            <person name="Salamov A.A."/>
            <person name="Otillar R."/>
            <person name="Lou Y."/>
            <person name="Lucas S."/>
            <person name="Hammon N."/>
            <person name="Glavina del Rio T."/>
            <person name="Detter J."/>
            <person name="Kalin E."/>
            <person name="Tice H."/>
            <person name="Pitluck S."/>
            <person name="Chapman J."/>
            <person name="Putnam N.H."/>
            <person name="Brunner A."/>
            <person name="Busov V."/>
            <person name="Campbell M."/>
            <person name="Chalot M."/>
            <person name="Covert S."/>
            <person name="Davis J."/>
            <person name="DiFazio S."/>
            <person name="Gribskov M."/>
            <person name="Gunter L."/>
            <person name="Hamberger B."/>
            <person name="Jansson S."/>
            <person name="Joshi C."/>
            <person name="Larimer F."/>
            <person name="Martin F."/>
            <person name="Napoli C."/>
            <person name="Nelson D."/>
            <person name="Ralph S."/>
            <person name="Rombauts S."/>
            <person name="Rouze P."/>
            <person name="Schrader J."/>
            <person name="Tsai C."/>
            <person name="Vahala J."/>
            <person name="Tuskan G."/>
            <person name="Rokhsar D."/>
        </authorList>
    </citation>
    <scope>GENOME REANNOTATION</scope>
    <source>
        <strain>cv. Nisqually</strain>
    </source>
</reference>
<reference key="3">
    <citation type="journal article" date="2014" name="Plant Physiol.">
        <title>Functional and evolutionary analysis of the CASPARIAN STRIP MEMBRANE DOMAIN PROTEIN family.</title>
        <authorList>
            <person name="Roppolo D."/>
            <person name="Boeckmann B."/>
            <person name="Pfister A."/>
            <person name="Boutet E."/>
            <person name="Rubio M.C."/>
            <person name="Denervaud-Tendon V."/>
            <person name="Vermeer J.E."/>
            <person name="Gheyselinck J."/>
            <person name="Xenarios I."/>
            <person name="Geldner N."/>
        </authorList>
    </citation>
    <scope>GENE FAMILY</scope>
    <scope>NOMENCLATURE</scope>
</reference>
<proteinExistence type="inferred from homology"/>
<sequence length="186" mass="20905">MRSPQPHRSGGDTQQHFQSTVSVQKLKRFNSLILVFRFAAFCFSLASAVFMLTNSRGSDSLHWYNFDAFRYVFAANAIVAIYSLFEMAASVWEISRNATLFPEICQVWFDFGHDQVFAYLLLSANTAGTELARTLKDTCTDNKAFCVQSDIAIVLGFAGFLFLGISSLFSGFRVVCFIINGSRFYV</sequence>
<name>CSPLI_POPTR</name>
<feature type="chain" id="PRO_0000376090" description="CASP-like protein 4C2">
    <location>
        <begin position="1"/>
        <end position="186"/>
    </location>
</feature>
<feature type="topological domain" description="Cytoplasmic" evidence="2">
    <location>
        <begin position="1"/>
        <end position="31"/>
    </location>
</feature>
<feature type="transmembrane region" description="Helical" evidence="2">
    <location>
        <begin position="32"/>
        <end position="52"/>
    </location>
</feature>
<feature type="topological domain" description="Extracellular" evidence="2">
    <location>
        <begin position="53"/>
        <end position="71"/>
    </location>
</feature>
<feature type="transmembrane region" description="Helical" evidence="2">
    <location>
        <begin position="72"/>
        <end position="92"/>
    </location>
</feature>
<feature type="topological domain" description="Cytoplasmic" evidence="2">
    <location>
        <begin position="93"/>
        <end position="103"/>
    </location>
</feature>
<feature type="transmembrane region" description="Helical" evidence="2">
    <location>
        <begin position="104"/>
        <end position="124"/>
    </location>
</feature>
<feature type="topological domain" description="Extracellular" evidence="2">
    <location>
        <begin position="125"/>
        <end position="150"/>
    </location>
</feature>
<feature type="transmembrane region" description="Helical" evidence="2">
    <location>
        <begin position="151"/>
        <end position="171"/>
    </location>
</feature>
<feature type="topological domain" description="Cytoplasmic" evidence="2">
    <location>
        <begin position="172"/>
        <end position="186"/>
    </location>
</feature>
<keyword id="KW-1003">Cell membrane</keyword>
<keyword id="KW-0472">Membrane</keyword>
<keyword id="KW-1185">Reference proteome</keyword>
<keyword id="KW-0812">Transmembrane</keyword>
<keyword id="KW-1133">Transmembrane helix</keyword>
<accession>B9HTK2</accession>
<evidence type="ECO:0000250" key="1"/>
<evidence type="ECO:0000255" key="2"/>
<evidence type="ECO:0000305" key="3"/>
<protein>
    <recommendedName>
        <fullName>CASP-like protein 4C2</fullName>
        <shortName>PtCASPL4C2</shortName>
    </recommendedName>
</protein>
<dbReference type="EMBL" id="CM009299">
    <property type="protein sequence ID" value="EEF01401.1"/>
    <property type="molecule type" value="Genomic_DNA"/>
</dbReference>
<dbReference type="RefSeq" id="XP_002315230.1">
    <property type="nucleotide sequence ID" value="XM_002315194.2"/>
</dbReference>
<dbReference type="SMR" id="B9HTK2"/>
<dbReference type="FunCoup" id="B9HTK2">
    <property type="interactions" value="643"/>
</dbReference>
<dbReference type="STRING" id="3694.B9HTK2"/>
<dbReference type="EnsemblPlants" id="Potri.010G207000.1.v4.1">
    <property type="protein sequence ID" value="Potri.010G207000.1.v4.1"/>
    <property type="gene ID" value="Potri.010G207000.v4.1"/>
</dbReference>
<dbReference type="Gramene" id="Potri.010G207000.1.v4.1">
    <property type="protein sequence ID" value="Potri.010G207000.1.v4.1"/>
    <property type="gene ID" value="Potri.010G207000.v4.1"/>
</dbReference>
<dbReference type="KEGG" id="pop:7489578"/>
<dbReference type="eggNOG" id="ENOG502QQ76">
    <property type="taxonomic scope" value="Eukaryota"/>
</dbReference>
<dbReference type="HOGENOM" id="CLU_1484566_0_0_1"/>
<dbReference type="InParanoid" id="B9HTK2"/>
<dbReference type="OMA" id="FRVACFI"/>
<dbReference type="OrthoDB" id="1907587at2759"/>
<dbReference type="Proteomes" id="UP000006729">
    <property type="component" value="Chromosome 10"/>
</dbReference>
<dbReference type="ExpressionAtlas" id="B9HTK2">
    <property type="expression patterns" value="baseline and differential"/>
</dbReference>
<dbReference type="GO" id="GO:0005886">
    <property type="term" value="C:plasma membrane"/>
    <property type="evidence" value="ECO:0007669"/>
    <property type="project" value="UniProtKB-SubCell"/>
</dbReference>
<dbReference type="InterPro" id="IPR006702">
    <property type="entry name" value="CASP_dom"/>
</dbReference>
<dbReference type="PANTHER" id="PTHR33573">
    <property type="entry name" value="CASP-LIKE PROTEIN 4A4"/>
    <property type="match status" value="1"/>
</dbReference>
<dbReference type="PANTHER" id="PTHR33573:SF56">
    <property type="entry name" value="CASP-LIKE PROTEIN 4C1"/>
    <property type="match status" value="1"/>
</dbReference>
<dbReference type="Pfam" id="PF04535">
    <property type="entry name" value="CASP_dom"/>
    <property type="match status" value="1"/>
</dbReference>